<geneLocation type="mitochondrion"/>
<organism>
    <name type="scientific">Ozimops beccarii</name>
    <name type="common">Beccari's free-tailed bat</name>
    <name type="synonym">Mormopterus beccarii</name>
    <dbReference type="NCBI Taxonomy" id="3370473"/>
    <lineage>
        <taxon>Eukaryota</taxon>
        <taxon>Metazoa</taxon>
        <taxon>Chordata</taxon>
        <taxon>Craniata</taxon>
        <taxon>Vertebrata</taxon>
        <taxon>Euteleostomi</taxon>
        <taxon>Mammalia</taxon>
        <taxon>Eutheria</taxon>
        <taxon>Laurasiatheria</taxon>
        <taxon>Chiroptera</taxon>
        <taxon>Yangochiroptera</taxon>
        <taxon>Molossidae</taxon>
        <taxon>Ozimops</taxon>
    </lineage>
</organism>
<dbReference type="EC" id="7.1.1.2" evidence="1"/>
<dbReference type="EMBL" id="AY504547">
    <property type="protein sequence ID" value="AAS91412.1"/>
    <property type="molecule type" value="Genomic_DNA"/>
</dbReference>
<dbReference type="SMR" id="Q330E5"/>
<dbReference type="GO" id="GO:0005743">
    <property type="term" value="C:mitochondrial inner membrane"/>
    <property type="evidence" value="ECO:0000250"/>
    <property type="project" value="UniProtKB"/>
</dbReference>
<dbReference type="GO" id="GO:0008137">
    <property type="term" value="F:NADH dehydrogenase (ubiquinone) activity"/>
    <property type="evidence" value="ECO:0000250"/>
    <property type="project" value="UniProtKB"/>
</dbReference>
<dbReference type="GO" id="GO:0006120">
    <property type="term" value="P:mitochondrial electron transport, NADH to ubiquinone"/>
    <property type="evidence" value="ECO:0000250"/>
    <property type="project" value="UniProtKB"/>
</dbReference>
<dbReference type="GO" id="GO:0032981">
    <property type="term" value="P:mitochondrial respiratory chain complex I assembly"/>
    <property type="evidence" value="ECO:0000250"/>
    <property type="project" value="UniProtKB"/>
</dbReference>
<dbReference type="InterPro" id="IPR050175">
    <property type="entry name" value="Complex_I_Subunit_2"/>
</dbReference>
<dbReference type="InterPro" id="IPR010933">
    <property type="entry name" value="NADH_DH_su2_C"/>
</dbReference>
<dbReference type="InterPro" id="IPR003917">
    <property type="entry name" value="NADH_UbQ_OxRdtase_chain2"/>
</dbReference>
<dbReference type="InterPro" id="IPR001750">
    <property type="entry name" value="ND/Mrp_TM"/>
</dbReference>
<dbReference type="PANTHER" id="PTHR46552">
    <property type="entry name" value="NADH-UBIQUINONE OXIDOREDUCTASE CHAIN 2"/>
    <property type="match status" value="1"/>
</dbReference>
<dbReference type="PANTHER" id="PTHR46552:SF1">
    <property type="entry name" value="NADH-UBIQUINONE OXIDOREDUCTASE CHAIN 2"/>
    <property type="match status" value="1"/>
</dbReference>
<dbReference type="Pfam" id="PF06444">
    <property type="entry name" value="NADH_dehy_S2_C"/>
    <property type="match status" value="1"/>
</dbReference>
<dbReference type="Pfam" id="PF00361">
    <property type="entry name" value="Proton_antipo_M"/>
    <property type="match status" value="1"/>
</dbReference>
<dbReference type="PRINTS" id="PR01436">
    <property type="entry name" value="NADHDHGNASE2"/>
</dbReference>
<feature type="chain" id="PRO_0000256670" description="NADH-ubiquinone oxidoreductase chain 2">
    <location>
        <begin position="1"/>
        <end position="347"/>
    </location>
</feature>
<feature type="transmembrane region" description="Helical" evidence="3">
    <location>
        <begin position="3"/>
        <end position="23"/>
    </location>
</feature>
<feature type="transmembrane region" description="Helical" evidence="3">
    <location>
        <begin position="25"/>
        <end position="45"/>
    </location>
</feature>
<feature type="transmembrane region" description="Helical" evidence="3">
    <location>
        <begin position="59"/>
        <end position="79"/>
    </location>
</feature>
<feature type="transmembrane region" description="Helical" evidence="3">
    <location>
        <begin position="96"/>
        <end position="116"/>
    </location>
</feature>
<feature type="transmembrane region" description="Helical" evidence="3">
    <location>
        <begin position="127"/>
        <end position="147"/>
    </location>
</feature>
<feature type="transmembrane region" description="Helical" evidence="3">
    <location>
        <begin position="148"/>
        <end position="168"/>
    </location>
</feature>
<feature type="transmembrane region" description="Helical" evidence="3">
    <location>
        <begin position="178"/>
        <end position="198"/>
    </location>
</feature>
<feature type="transmembrane region" description="Helical" evidence="3">
    <location>
        <begin position="201"/>
        <end position="221"/>
    </location>
</feature>
<feature type="transmembrane region" description="Helical" evidence="3">
    <location>
        <begin position="247"/>
        <end position="267"/>
    </location>
</feature>
<feature type="transmembrane region" description="Helical" evidence="3">
    <location>
        <begin position="276"/>
        <end position="296"/>
    </location>
</feature>
<feature type="transmembrane region" description="Helical" evidence="3">
    <location>
        <begin position="325"/>
        <end position="345"/>
    </location>
</feature>
<sequence length="347" mass="38888">MNPLIMSIILATIILGTTIVMTGSHWLMIWIGFEMNMLAIIPMLMKQHNPRSTEAATKYFFTQATASMLLMLAGIINLMYSGQWTGVKLVNPTASIIMTLALAMKLGLAPFHFWVPEVTQGIPLSSGLILLTWQKLASMTGLYMISPGINLNMLMTMSMLSIAIGGWGGLNQTQLRKIMAYSSIAHMGWMTAILIYNPTMTLLNLVIYILMTTTMFMLFMINSSTTTLSLSHTWNKMPLITTTTLVTLLSMGGLPPLMGFLPKWMIIQEMTKNNNIVLPTIMAITALLNLFFYMRLTYATSLTMFPTTNNMKIKWQFENPKYLSLLTPMIMMSTLTLPLAPMMMILN</sequence>
<reference key="1">
    <citation type="submission" date="2003-12" db="EMBL/GenBank/DDBJ databases">
        <title>Bats and birds: flying in the face of mtDNA evolutionary rates.</title>
        <authorList>
            <person name="Worthington Wilmer J.M."/>
            <person name="Schneider C.J."/>
            <person name="Sorenson M.D."/>
        </authorList>
    </citation>
    <scope>NUCLEOTIDE SEQUENCE [GENOMIC DNA]</scope>
    <source>
        <strain>Isolate HC</strain>
    </source>
</reference>
<evidence type="ECO:0000250" key="1">
    <source>
        <dbReference type="UniProtKB" id="P03891"/>
    </source>
</evidence>
<evidence type="ECO:0000250" key="2">
    <source>
        <dbReference type="UniProtKB" id="P03892"/>
    </source>
</evidence>
<evidence type="ECO:0000255" key="3"/>
<evidence type="ECO:0000305" key="4"/>
<accession>Q330E5</accession>
<gene>
    <name evidence="1" type="primary">MT-ND2</name>
    <name type="synonym">MTND2</name>
    <name type="synonym">NADH2</name>
    <name type="synonym">ND2</name>
</gene>
<proteinExistence type="inferred from homology"/>
<name>NU2M_OZIBE</name>
<keyword id="KW-0249">Electron transport</keyword>
<keyword id="KW-0472">Membrane</keyword>
<keyword id="KW-0496">Mitochondrion</keyword>
<keyword id="KW-0999">Mitochondrion inner membrane</keyword>
<keyword id="KW-0520">NAD</keyword>
<keyword id="KW-0679">Respiratory chain</keyword>
<keyword id="KW-1278">Translocase</keyword>
<keyword id="KW-0812">Transmembrane</keyword>
<keyword id="KW-1133">Transmembrane helix</keyword>
<keyword id="KW-0813">Transport</keyword>
<keyword id="KW-0830">Ubiquinone</keyword>
<protein>
    <recommendedName>
        <fullName evidence="1">NADH-ubiquinone oxidoreductase chain 2</fullName>
        <ecNumber evidence="1">7.1.1.2</ecNumber>
    </recommendedName>
    <alternativeName>
        <fullName>NADH dehydrogenase subunit 2</fullName>
    </alternativeName>
</protein>
<comment type="function">
    <text evidence="1">Core subunit of the mitochondrial membrane respiratory chain NADH dehydrogenase (Complex I) which catalyzes electron transfer from NADH through the respiratory chain, using ubiquinone as an electron acceptor. Essential for the catalytic activity and assembly of complex I.</text>
</comment>
<comment type="catalytic activity">
    <reaction evidence="1">
        <text>a ubiquinone + NADH + 5 H(+)(in) = a ubiquinol + NAD(+) + 4 H(+)(out)</text>
        <dbReference type="Rhea" id="RHEA:29091"/>
        <dbReference type="Rhea" id="RHEA-COMP:9565"/>
        <dbReference type="Rhea" id="RHEA-COMP:9566"/>
        <dbReference type="ChEBI" id="CHEBI:15378"/>
        <dbReference type="ChEBI" id="CHEBI:16389"/>
        <dbReference type="ChEBI" id="CHEBI:17976"/>
        <dbReference type="ChEBI" id="CHEBI:57540"/>
        <dbReference type="ChEBI" id="CHEBI:57945"/>
        <dbReference type="EC" id="7.1.1.2"/>
    </reaction>
</comment>
<comment type="subunit">
    <text evidence="1 2">Core subunit of respiratory chain NADH dehydrogenase (Complex I) which is composed of 45 different subunits. Interacts with TMEM242 (By similarity).</text>
</comment>
<comment type="subcellular location">
    <subcellularLocation>
        <location evidence="2">Mitochondrion inner membrane</location>
        <topology evidence="3">Multi-pass membrane protein</topology>
    </subcellularLocation>
</comment>
<comment type="similarity">
    <text evidence="4">Belongs to the complex I subunit 2 family.</text>
</comment>